<protein>
    <recommendedName>
        <fullName>Defensin-like protein 242</fullName>
    </recommendedName>
    <alternativeName>
        <fullName>S locus cysteine-rich-like protein 10</fullName>
        <shortName>Protein SCRL10</shortName>
        <shortName>SCR-like protein 10</shortName>
    </alternativeName>
</protein>
<comment type="subcellular location">
    <subcellularLocation>
        <location evidence="1">Secreted</location>
    </subcellularLocation>
</comment>
<comment type="similarity">
    <text evidence="3">Belongs to the DEFL family.</text>
</comment>
<accession>P82629</accession>
<accession>Q6GKW3</accession>
<reference key="1">
    <citation type="journal article" date="1998" name="Nature">
        <title>Analysis of 1.9 Mb of contiguous sequence from chromosome 4 of Arabidopsis thaliana.</title>
        <authorList>
            <person name="Bevan M."/>
            <person name="Bancroft I."/>
            <person name="Bent E."/>
            <person name="Love K."/>
            <person name="Goodman H.M."/>
            <person name="Dean C."/>
            <person name="Bergkamp R."/>
            <person name="Dirkse W."/>
            <person name="van Staveren M."/>
            <person name="Stiekema W."/>
            <person name="Drost L."/>
            <person name="Ridley P."/>
            <person name="Hudson S.-A."/>
            <person name="Patel K."/>
            <person name="Murphy G."/>
            <person name="Piffanelli P."/>
            <person name="Wedler H."/>
            <person name="Wedler E."/>
            <person name="Wambutt R."/>
            <person name="Weitzenegger T."/>
            <person name="Pohl T."/>
            <person name="Terryn N."/>
            <person name="Gielen J."/>
            <person name="Villarroel R."/>
            <person name="De Clercq R."/>
            <person name="van Montagu M."/>
            <person name="Lecharny A."/>
            <person name="Aubourg S."/>
            <person name="Gy I."/>
            <person name="Kreis M."/>
            <person name="Lao N."/>
            <person name="Kavanagh T."/>
            <person name="Hempel S."/>
            <person name="Kotter P."/>
            <person name="Entian K.-D."/>
            <person name="Rieger M."/>
            <person name="Schaefer M."/>
            <person name="Funk B."/>
            <person name="Mueller-Auer S."/>
            <person name="Silvey M."/>
            <person name="James R."/>
            <person name="Monfort A."/>
            <person name="Pons A."/>
            <person name="Puigdomenech P."/>
            <person name="Douka A."/>
            <person name="Voukelatou E."/>
            <person name="Milioni D."/>
            <person name="Hatzopoulos P."/>
            <person name="Piravandi E."/>
            <person name="Obermaier B."/>
            <person name="Hilbert H."/>
            <person name="Duesterhoeft A."/>
            <person name="Moores T."/>
            <person name="Jones J.D.G."/>
            <person name="Eneva T."/>
            <person name="Palme K."/>
            <person name="Benes V."/>
            <person name="Rechmann S."/>
            <person name="Ansorge W."/>
            <person name="Cooke R."/>
            <person name="Berger C."/>
            <person name="Delseny M."/>
            <person name="Voet M."/>
            <person name="Volckaert G."/>
            <person name="Mewes H.-W."/>
            <person name="Klosterman S."/>
            <person name="Schueller C."/>
            <person name="Chalwatzis N."/>
        </authorList>
    </citation>
    <scope>NUCLEOTIDE SEQUENCE [LARGE SCALE GENOMIC DNA]</scope>
    <source>
        <strain>cv. Columbia</strain>
    </source>
</reference>
<reference evidence="3" key="2">
    <citation type="journal article" date="1999" name="Nature">
        <title>Sequence and analysis of chromosome 4 of the plant Arabidopsis thaliana.</title>
        <authorList>
            <person name="Mayer K.F.X."/>
            <person name="Schueller C."/>
            <person name="Wambutt R."/>
            <person name="Murphy G."/>
            <person name="Volckaert G."/>
            <person name="Pohl T."/>
            <person name="Duesterhoeft A."/>
            <person name="Stiekema W."/>
            <person name="Entian K.-D."/>
            <person name="Terryn N."/>
            <person name="Harris B."/>
            <person name="Ansorge W."/>
            <person name="Brandt P."/>
            <person name="Grivell L.A."/>
            <person name="Rieger M."/>
            <person name="Weichselgartner M."/>
            <person name="de Simone V."/>
            <person name="Obermaier B."/>
            <person name="Mache R."/>
            <person name="Mueller M."/>
            <person name="Kreis M."/>
            <person name="Delseny M."/>
            <person name="Puigdomenech P."/>
            <person name="Watson M."/>
            <person name="Schmidtheini T."/>
            <person name="Reichert B."/>
            <person name="Portetelle D."/>
            <person name="Perez-Alonso M."/>
            <person name="Boutry M."/>
            <person name="Bancroft I."/>
            <person name="Vos P."/>
            <person name="Hoheisel J."/>
            <person name="Zimmermann W."/>
            <person name="Wedler H."/>
            <person name="Ridley P."/>
            <person name="Langham S.-A."/>
            <person name="McCullagh B."/>
            <person name="Bilham L."/>
            <person name="Robben J."/>
            <person name="van der Schueren J."/>
            <person name="Grymonprez B."/>
            <person name="Chuang Y.-J."/>
            <person name="Vandenbussche F."/>
            <person name="Braeken M."/>
            <person name="Weltjens I."/>
            <person name="Voet M."/>
            <person name="Bastiaens I."/>
            <person name="Aert R."/>
            <person name="Defoor E."/>
            <person name="Weitzenegger T."/>
            <person name="Bothe G."/>
            <person name="Ramsperger U."/>
            <person name="Hilbert H."/>
            <person name="Braun M."/>
            <person name="Holzer E."/>
            <person name="Brandt A."/>
            <person name="Peters S."/>
            <person name="van Staveren M."/>
            <person name="Dirkse W."/>
            <person name="Mooijman P."/>
            <person name="Klein Lankhorst R."/>
            <person name="Rose M."/>
            <person name="Hauf J."/>
            <person name="Koetter P."/>
            <person name="Berneiser S."/>
            <person name="Hempel S."/>
            <person name="Feldpausch M."/>
            <person name="Lamberth S."/>
            <person name="Van den Daele H."/>
            <person name="De Keyser A."/>
            <person name="Buysshaert C."/>
            <person name="Gielen J."/>
            <person name="Villarroel R."/>
            <person name="De Clercq R."/>
            <person name="van Montagu M."/>
            <person name="Rogers J."/>
            <person name="Cronin A."/>
            <person name="Quail M.A."/>
            <person name="Bray-Allen S."/>
            <person name="Clark L."/>
            <person name="Doggett J."/>
            <person name="Hall S."/>
            <person name="Kay M."/>
            <person name="Lennard N."/>
            <person name="McLay K."/>
            <person name="Mayes R."/>
            <person name="Pettett A."/>
            <person name="Rajandream M.A."/>
            <person name="Lyne M."/>
            <person name="Benes V."/>
            <person name="Rechmann S."/>
            <person name="Borkova D."/>
            <person name="Bloecker H."/>
            <person name="Scharfe M."/>
            <person name="Grimm M."/>
            <person name="Loehnert T.-H."/>
            <person name="Dose S."/>
            <person name="de Haan M."/>
            <person name="Maarse A.C."/>
            <person name="Schaefer M."/>
            <person name="Mueller-Auer S."/>
            <person name="Gabel C."/>
            <person name="Fuchs M."/>
            <person name="Fartmann B."/>
            <person name="Granderath K."/>
            <person name="Dauner D."/>
            <person name="Herzl A."/>
            <person name="Neumann S."/>
            <person name="Argiriou A."/>
            <person name="Vitale D."/>
            <person name="Liguori R."/>
            <person name="Piravandi E."/>
            <person name="Massenet O."/>
            <person name="Quigley F."/>
            <person name="Clabauld G."/>
            <person name="Muendlein A."/>
            <person name="Felber R."/>
            <person name="Schnabl S."/>
            <person name="Hiller R."/>
            <person name="Schmidt W."/>
            <person name="Lecharny A."/>
            <person name="Aubourg S."/>
            <person name="Chefdor F."/>
            <person name="Cooke R."/>
            <person name="Berger C."/>
            <person name="Monfort A."/>
            <person name="Casacuberta E."/>
            <person name="Gibbons T."/>
            <person name="Weber N."/>
            <person name="Vandenbol M."/>
            <person name="Bargues M."/>
            <person name="Terol J."/>
            <person name="Torres A."/>
            <person name="Perez-Perez A."/>
            <person name="Purnelle B."/>
            <person name="Bent E."/>
            <person name="Johnson S."/>
            <person name="Tacon D."/>
            <person name="Jesse T."/>
            <person name="Heijnen L."/>
            <person name="Schwarz S."/>
            <person name="Scholler P."/>
            <person name="Heber S."/>
            <person name="Francs P."/>
            <person name="Bielke C."/>
            <person name="Frishman D."/>
            <person name="Haase D."/>
            <person name="Lemcke K."/>
            <person name="Mewes H.-W."/>
            <person name="Stocker S."/>
            <person name="Zaccaria P."/>
            <person name="Bevan M."/>
            <person name="Wilson R.K."/>
            <person name="de la Bastide M."/>
            <person name="Habermann K."/>
            <person name="Parnell L."/>
            <person name="Dedhia N."/>
            <person name="Gnoj L."/>
            <person name="Schutz K."/>
            <person name="Huang E."/>
            <person name="Spiegel L."/>
            <person name="Sekhon M."/>
            <person name="Murray J."/>
            <person name="Sheet P."/>
            <person name="Cordes M."/>
            <person name="Abu-Threideh J."/>
            <person name="Stoneking T."/>
            <person name="Kalicki J."/>
            <person name="Graves T."/>
            <person name="Harmon G."/>
            <person name="Edwards J."/>
            <person name="Latreille P."/>
            <person name="Courtney L."/>
            <person name="Cloud J."/>
            <person name="Abbott A."/>
            <person name="Scott K."/>
            <person name="Johnson D."/>
            <person name="Minx P."/>
            <person name="Bentley D."/>
            <person name="Fulton B."/>
            <person name="Miller N."/>
            <person name="Greco T."/>
            <person name="Kemp K."/>
            <person name="Kramer J."/>
            <person name="Fulton L."/>
            <person name="Mardis E."/>
            <person name="Dante M."/>
            <person name="Pepin K."/>
            <person name="Hillier L.W."/>
            <person name="Nelson J."/>
            <person name="Spieth J."/>
            <person name="Ryan E."/>
            <person name="Andrews S."/>
            <person name="Geisel C."/>
            <person name="Layman D."/>
            <person name="Du H."/>
            <person name="Ali J."/>
            <person name="Berghoff A."/>
            <person name="Jones K."/>
            <person name="Drone K."/>
            <person name="Cotton M."/>
            <person name="Joshu C."/>
            <person name="Antonoiu B."/>
            <person name="Zidanic M."/>
            <person name="Strong C."/>
            <person name="Sun H."/>
            <person name="Lamar B."/>
            <person name="Yordan C."/>
            <person name="Ma P."/>
            <person name="Zhong J."/>
            <person name="Preston R."/>
            <person name="Vil D."/>
            <person name="Shekher M."/>
            <person name="Matero A."/>
            <person name="Shah R."/>
            <person name="Swaby I.K."/>
            <person name="O'Shaughnessy A."/>
            <person name="Rodriguez M."/>
            <person name="Hoffman J."/>
            <person name="Till S."/>
            <person name="Granat S."/>
            <person name="Shohdy N."/>
            <person name="Hasegawa A."/>
            <person name="Hameed A."/>
            <person name="Lodhi M."/>
            <person name="Johnson A."/>
            <person name="Chen E."/>
            <person name="Marra M.A."/>
            <person name="Martienssen R."/>
            <person name="McCombie W.R."/>
        </authorList>
    </citation>
    <scope>NUCLEOTIDE SEQUENCE [LARGE SCALE GENOMIC DNA]</scope>
    <source>
        <strain>cv. Columbia</strain>
    </source>
</reference>
<reference key="3">
    <citation type="journal article" date="2017" name="Plant J.">
        <title>Araport11: a complete reannotation of the Arabidopsis thaliana reference genome.</title>
        <authorList>
            <person name="Cheng C.Y."/>
            <person name="Krishnakumar V."/>
            <person name="Chan A.P."/>
            <person name="Thibaud-Nissen F."/>
            <person name="Schobel S."/>
            <person name="Town C.D."/>
        </authorList>
    </citation>
    <scope>GENOME REANNOTATION</scope>
    <source>
        <strain>cv. Columbia</strain>
    </source>
</reference>
<reference key="4">
    <citation type="submission" date="2004-08" db="EMBL/GenBank/DDBJ databases">
        <title>Arabidopsis ORF clones.</title>
        <authorList>
            <person name="Kim C.J."/>
            <person name="Chen H."/>
            <person name="Cheuk R.F."/>
            <person name="Shinn P."/>
            <person name="Ecker J.R."/>
        </authorList>
    </citation>
    <scope>NUCLEOTIDE SEQUENCE [LARGE SCALE MRNA]</scope>
    <source>
        <strain>cv. Columbia</strain>
    </source>
</reference>
<reference key="5">
    <citation type="submission" date="2005-03" db="EMBL/GenBank/DDBJ databases">
        <title>Large-scale analysis of RIKEN Arabidopsis full-length (RAFL) cDNAs.</title>
        <authorList>
            <person name="Totoki Y."/>
            <person name="Seki M."/>
            <person name="Ishida J."/>
            <person name="Nakajima M."/>
            <person name="Enju A."/>
            <person name="Kamiya A."/>
            <person name="Narusaka M."/>
            <person name="Shin-i T."/>
            <person name="Nakagawa M."/>
            <person name="Sakamoto N."/>
            <person name="Oishi K."/>
            <person name="Kohara Y."/>
            <person name="Kobayashi M."/>
            <person name="Toyoda A."/>
            <person name="Sakaki Y."/>
            <person name="Sakurai T."/>
            <person name="Iida K."/>
            <person name="Akiyama K."/>
            <person name="Satou M."/>
            <person name="Toyoda T."/>
            <person name="Konagaya A."/>
            <person name="Carninci P."/>
            <person name="Kawai J."/>
            <person name="Hayashizaki Y."/>
            <person name="Shinozaki K."/>
        </authorList>
    </citation>
    <scope>NUCLEOTIDE SEQUENCE [LARGE SCALE MRNA]</scope>
    <source>
        <strain>cv. Columbia</strain>
    </source>
</reference>
<reference evidence="3" key="6">
    <citation type="journal article" date="2001" name="Plant Mol. Biol.">
        <title>Two large Arabidopsis thaliana gene families are homologous to the Brassica gene superfamily that encodes pollen coat proteins and the male component of the self-incompatibility response.</title>
        <authorList>
            <person name="Vanoosthuyse V."/>
            <person name="Miege C."/>
            <person name="Dumas C."/>
            <person name="Cock J.M."/>
        </authorList>
    </citation>
    <scope>IDENTIFICATION</scope>
</reference>
<reference key="7">
    <citation type="journal article" date="2005" name="Plant Physiol.">
        <title>Genome organization of more than 300 defensin-like genes in Arabidopsis.</title>
        <authorList>
            <person name="Silverstein K.A.T."/>
            <person name="Graham M.A."/>
            <person name="Paape T.D."/>
            <person name="VandenBosch K.A."/>
        </authorList>
    </citation>
    <scope>GENE FAMILY</scope>
</reference>
<name>DF242_ARATH</name>
<keyword id="KW-0929">Antimicrobial</keyword>
<keyword id="KW-1015">Disulfide bond</keyword>
<keyword id="KW-0295">Fungicide</keyword>
<keyword id="KW-0611">Plant defense</keyword>
<keyword id="KW-1185">Reference proteome</keyword>
<keyword id="KW-0964">Secreted</keyword>
<keyword id="KW-0732">Signal</keyword>
<dbReference type="EMBL" id="Z97339">
    <property type="status" value="NOT_ANNOTATED_CDS"/>
    <property type="molecule type" value="Genomic_DNA"/>
</dbReference>
<dbReference type="EMBL" id="AL161542">
    <property type="status" value="NOT_ANNOTATED_CDS"/>
    <property type="molecule type" value="Genomic_DNA"/>
</dbReference>
<dbReference type="EMBL" id="CP002687">
    <property type="protein sequence ID" value="AEE83643.1"/>
    <property type="molecule type" value="Genomic_DNA"/>
</dbReference>
<dbReference type="EMBL" id="BT014951">
    <property type="protein sequence ID" value="AAT47802.1"/>
    <property type="molecule type" value="mRNA"/>
</dbReference>
<dbReference type="EMBL" id="BT015385">
    <property type="protein sequence ID" value="AAU05508.1"/>
    <property type="molecule type" value="mRNA"/>
</dbReference>
<dbReference type="EMBL" id="AK221079">
    <property type="protein sequence ID" value="BAD94915.1"/>
    <property type="molecule type" value="mRNA"/>
</dbReference>
<dbReference type="RefSeq" id="NP_974556.1">
    <property type="nucleotide sequence ID" value="NM_202827.2"/>
</dbReference>
<dbReference type="SMR" id="P82629"/>
<dbReference type="BioGRID" id="30318">
    <property type="interactions" value="1"/>
</dbReference>
<dbReference type="IntAct" id="P82629">
    <property type="interactions" value="1"/>
</dbReference>
<dbReference type="PaxDb" id="3702-AT4G15735.1"/>
<dbReference type="ProteomicsDB" id="224027"/>
<dbReference type="EnsemblPlants" id="AT4G15735.1">
    <property type="protein sequence ID" value="AT4G15735.1"/>
    <property type="gene ID" value="AT4G15735"/>
</dbReference>
<dbReference type="GeneID" id="2745709"/>
<dbReference type="Gramene" id="AT4G15735.1">
    <property type="protein sequence ID" value="AT4G15735.1"/>
    <property type="gene ID" value="AT4G15735"/>
</dbReference>
<dbReference type="KEGG" id="ath:AT4G15735"/>
<dbReference type="Araport" id="AT4G15735"/>
<dbReference type="TAIR" id="AT4G15735">
    <property type="gene designation" value="SCRL10"/>
</dbReference>
<dbReference type="eggNOG" id="ENOG502R1P6">
    <property type="taxonomic scope" value="Eukaryota"/>
</dbReference>
<dbReference type="HOGENOM" id="CLU_174283_0_0_1"/>
<dbReference type="InParanoid" id="P82629"/>
<dbReference type="OMA" id="CECSVIC"/>
<dbReference type="PhylomeDB" id="P82629"/>
<dbReference type="PRO" id="PR:P82629"/>
<dbReference type="Proteomes" id="UP000006548">
    <property type="component" value="Chromosome 4"/>
</dbReference>
<dbReference type="ExpressionAtlas" id="P82629">
    <property type="expression patterns" value="baseline"/>
</dbReference>
<dbReference type="GO" id="GO:0005576">
    <property type="term" value="C:extracellular region"/>
    <property type="evidence" value="ECO:0007669"/>
    <property type="project" value="UniProtKB-SubCell"/>
</dbReference>
<dbReference type="GO" id="GO:0050832">
    <property type="term" value="P:defense response to fungus"/>
    <property type="evidence" value="ECO:0007669"/>
    <property type="project" value="UniProtKB-KW"/>
</dbReference>
<dbReference type="GO" id="GO:0031640">
    <property type="term" value="P:killing of cells of another organism"/>
    <property type="evidence" value="ECO:0007669"/>
    <property type="project" value="UniProtKB-KW"/>
</dbReference>
<dbReference type="GO" id="GO:0007165">
    <property type="term" value="P:signal transduction"/>
    <property type="evidence" value="ECO:0007669"/>
    <property type="project" value="InterPro"/>
</dbReference>
<dbReference type="InterPro" id="IPR010682">
    <property type="entry name" value="SCRL"/>
</dbReference>
<dbReference type="PANTHER" id="PTHR34450:SF9">
    <property type="entry name" value="DEFENSIN-LIKE PROTEIN 242-RELATED"/>
    <property type="match status" value="1"/>
</dbReference>
<dbReference type="PANTHER" id="PTHR34450">
    <property type="entry name" value="DEFENSIN-LIKE PROTEIN 245-RELATED"/>
    <property type="match status" value="1"/>
</dbReference>
<dbReference type="Pfam" id="PF06876">
    <property type="entry name" value="SCRL"/>
    <property type="match status" value="1"/>
</dbReference>
<evidence type="ECO:0000250" key="1"/>
<evidence type="ECO:0000255" key="2"/>
<evidence type="ECO:0000305" key="3"/>
<feature type="signal peptide" evidence="2">
    <location>
        <begin position="1"/>
        <end position="22"/>
    </location>
</feature>
<feature type="chain" id="PRO_0000031936" description="Defensin-like protein 242">
    <location>
        <begin position="23"/>
        <end position="107"/>
    </location>
</feature>
<feature type="disulfide bond" evidence="1">
    <location>
        <begin position="45"/>
        <end position="100"/>
    </location>
</feature>
<feature type="disulfide bond" evidence="1">
    <location>
        <begin position="55"/>
        <end position="84"/>
    </location>
</feature>
<feature type="disulfide bond" evidence="1">
    <location>
        <begin position="65"/>
        <end position="94"/>
    </location>
</feature>
<feature type="disulfide bond" evidence="1">
    <location>
        <begin position="82"/>
        <end position="96"/>
    </location>
</feature>
<gene>
    <name type="primary">SCRL10</name>
    <name type="ordered locus">At4g15735</name>
    <name type="ORF">FCAALL</name>
</gene>
<organism evidence="3">
    <name type="scientific">Arabidopsis thaliana</name>
    <name type="common">Mouse-ear cress</name>
    <dbReference type="NCBI Taxonomy" id="3702"/>
    <lineage>
        <taxon>Eukaryota</taxon>
        <taxon>Viridiplantae</taxon>
        <taxon>Streptophyta</taxon>
        <taxon>Embryophyta</taxon>
        <taxon>Tracheophyta</taxon>
        <taxon>Spermatophyta</taxon>
        <taxon>Magnoliopsida</taxon>
        <taxon>eudicotyledons</taxon>
        <taxon>Gunneridae</taxon>
        <taxon>Pentapetalae</taxon>
        <taxon>rosids</taxon>
        <taxon>malvids</taxon>
        <taxon>Brassicales</taxon>
        <taxon>Brassicaceae</taxon>
        <taxon>Camelineae</taxon>
        <taxon>Arabidopsis</taxon>
    </lineage>
</organism>
<sequence length="107" mass="11909">MKVVAIFLASCVLFSLIPTHLSHEEPKVAPTEELMFAPSNQPRYCRSRQVFDGSCTDRGTPRTTCFLDFLGARSASEMPKNCDCTPQPNNKRLCECSVICTDCCVKN</sequence>
<proteinExistence type="inferred from homology"/>